<reference key="1">
    <citation type="journal article" date="1990" name="EMBO J.">
        <title>hSP, the domain-duplicated homolog of pS2 protein, is co-expressed with pS2 in stomach but not in breast carcinoma.</title>
        <authorList>
            <person name="Tomasetto C."/>
            <person name="Rio M.C."/>
            <person name="Gautier C."/>
            <person name="Wolf C."/>
            <person name="Hareuveni M."/>
            <person name="Chambon P."/>
            <person name="Lathe R."/>
        </authorList>
    </citation>
    <scope>NUCLEOTIDE SEQUENCE [GENOMIC DNA / MRNA]</scope>
    <source>
        <tissue>Stomach</tissue>
    </source>
</reference>
<reference key="2">
    <citation type="journal article" date="1997" name="Genomics">
        <title>The three human trefoil genes TFF1, TFF2, and TFF3 are located within a region of 55 kb on chromosome 21q22.3.</title>
        <authorList>
            <person name="Seib T."/>
            <person name="Blin N."/>
            <person name="Hilgert K."/>
            <person name="Seifert M."/>
            <person name="Theisinger B."/>
            <person name="Engel M."/>
            <person name="Dooley S."/>
            <person name="Zang K.D."/>
            <person name="Welter C."/>
        </authorList>
    </citation>
    <scope>NUCLEOTIDE SEQUENCE [GENOMIC DNA]</scope>
</reference>
<reference key="3">
    <citation type="journal article" date="2000" name="Genomics">
        <title>Refined localization of autosomal recessive nonsyndromic deafness DFNB10 locus using 34 novel microsatellite markers, genomic structure, and exclusion of six known genes in the region.</title>
        <authorList>
            <person name="Berry A."/>
            <person name="Scott H.S."/>
            <person name="Kudoh J."/>
            <person name="Talior I."/>
            <person name="Korostishevsky M."/>
            <person name="Wattenhofer M."/>
            <person name="Guipponi M."/>
            <person name="Barras C."/>
            <person name="Rossier C."/>
            <person name="Shibuya K."/>
            <person name="Wang J."/>
            <person name="Kawasaki K."/>
            <person name="Asakawa S."/>
            <person name="Minoshima S."/>
            <person name="Shimizu N."/>
            <person name="Antonarakis S.E."/>
            <person name="Bonne-Tamir B."/>
        </authorList>
    </citation>
    <scope>NUCLEOTIDE SEQUENCE [GENOMIC DNA]</scope>
</reference>
<reference key="4">
    <citation type="journal article" date="2004" name="Genome Res.">
        <title>The status, quality, and expansion of the NIH full-length cDNA project: the Mammalian Gene Collection (MGC).</title>
        <authorList>
            <consortium name="The MGC Project Team"/>
        </authorList>
    </citation>
    <scope>NUCLEOTIDE SEQUENCE [LARGE SCALE MRNA]</scope>
    <source>
        <tissue>Colon</tissue>
    </source>
</reference>
<protein>
    <recommendedName>
        <fullName>Trefoil factor 2</fullName>
    </recommendedName>
    <alternativeName>
        <fullName>Spasmolysin</fullName>
    </alternativeName>
    <alternativeName>
        <fullName>Spasmolytic polypeptide</fullName>
        <shortName>SP</shortName>
    </alternativeName>
</protein>
<organism>
    <name type="scientific">Homo sapiens</name>
    <name type="common">Human</name>
    <dbReference type="NCBI Taxonomy" id="9606"/>
    <lineage>
        <taxon>Eukaryota</taxon>
        <taxon>Metazoa</taxon>
        <taxon>Chordata</taxon>
        <taxon>Craniata</taxon>
        <taxon>Vertebrata</taxon>
        <taxon>Euteleostomi</taxon>
        <taxon>Mammalia</taxon>
        <taxon>Eutheria</taxon>
        <taxon>Euarchontoglires</taxon>
        <taxon>Primates</taxon>
        <taxon>Haplorrhini</taxon>
        <taxon>Catarrhini</taxon>
        <taxon>Hominidae</taxon>
        <taxon>Homo</taxon>
    </lineage>
</organism>
<feature type="signal peptide" evidence="2">
    <location>
        <begin position="1"/>
        <end position="23"/>
    </location>
</feature>
<feature type="chain" id="PRO_0000023460" description="Trefoil factor 2">
    <location>
        <begin position="24"/>
        <end position="129"/>
    </location>
</feature>
<feature type="domain" description="P-type 1" evidence="3">
    <location>
        <begin position="29"/>
        <end position="73"/>
    </location>
</feature>
<feature type="domain" description="P-type 2" evidence="3">
    <location>
        <begin position="79"/>
        <end position="122"/>
    </location>
</feature>
<feature type="disulfide bond" evidence="3">
    <location>
        <begin position="29"/>
        <end position="127"/>
    </location>
</feature>
<feature type="disulfide bond" evidence="3">
    <location>
        <begin position="31"/>
        <end position="58"/>
    </location>
</feature>
<feature type="disulfide bond" evidence="3">
    <location>
        <begin position="42"/>
        <end position="57"/>
    </location>
</feature>
<feature type="disulfide bond" evidence="3">
    <location>
        <begin position="52"/>
        <end position="69"/>
    </location>
</feature>
<feature type="disulfide bond" evidence="3">
    <location>
        <begin position="81"/>
        <end position="107"/>
    </location>
</feature>
<feature type="disulfide bond" evidence="3">
    <location>
        <begin position="91"/>
        <end position="106"/>
    </location>
</feature>
<feature type="disulfide bond" evidence="3">
    <location>
        <begin position="101"/>
        <end position="118"/>
    </location>
</feature>
<feature type="sequence variant" id="VAR_053564" description="In dbSNP:rs7277409.">
    <original>R</original>
    <variation>W</variation>
    <location>
        <position position="3"/>
    </location>
</feature>
<feature type="sequence conflict" description="In Ref. 1." evidence="4" ref="1">
    <original>MGRRDAQLLAALLVLGLCA</original>
    <variation>RHGTARRPAPGSAPRPGAMC</variation>
    <location>
        <begin position="1"/>
        <end position="19"/>
    </location>
</feature>
<feature type="sequence conflict" description="In Ref. 1; CAA35995." evidence="4" ref="1">
    <original>K</original>
    <variation>N</variation>
    <location>
        <position position="122"/>
    </location>
</feature>
<keyword id="KW-1015">Disulfide bond</keyword>
<keyword id="KW-1267">Proteomics identification</keyword>
<keyword id="KW-1185">Reference proteome</keyword>
<keyword id="KW-0677">Repeat</keyword>
<keyword id="KW-0964">Secreted</keyword>
<keyword id="KW-0732">Signal</keyword>
<dbReference type="EMBL" id="X51698">
    <property type="protein sequence ID" value="CAA35995.1"/>
    <property type="molecule type" value="mRNA"/>
</dbReference>
<dbReference type="EMBL" id="U47292">
    <property type="protein sequence ID" value="AAB05397.1"/>
    <property type="molecule type" value="Genomic_DNA"/>
</dbReference>
<dbReference type="EMBL" id="U47289">
    <property type="protein sequence ID" value="AAB05397.1"/>
    <property type="status" value="JOINED"/>
    <property type="molecule type" value="Genomic_DNA"/>
</dbReference>
<dbReference type="EMBL" id="U47290">
    <property type="protein sequence ID" value="AAB05397.1"/>
    <property type="status" value="JOINED"/>
    <property type="molecule type" value="Genomic_DNA"/>
</dbReference>
<dbReference type="EMBL" id="U47291">
    <property type="protein sequence ID" value="AAB05397.1"/>
    <property type="status" value="JOINED"/>
    <property type="molecule type" value="Genomic_DNA"/>
</dbReference>
<dbReference type="EMBL" id="AB038162">
    <property type="protein sequence ID" value="BAB13730.1"/>
    <property type="molecule type" value="Genomic_DNA"/>
</dbReference>
<dbReference type="EMBL" id="BC032820">
    <property type="protein sequence ID" value="AAH32820.1"/>
    <property type="molecule type" value="mRNA"/>
</dbReference>
<dbReference type="CCDS" id="CCDS13684.1"/>
<dbReference type="PIR" id="S12371">
    <property type="entry name" value="S12371"/>
</dbReference>
<dbReference type="RefSeq" id="NP_005414.1">
    <property type="nucleotide sequence ID" value="NM_005423.5"/>
</dbReference>
<dbReference type="SMR" id="Q03403"/>
<dbReference type="BioGRID" id="112890">
    <property type="interactions" value="4"/>
</dbReference>
<dbReference type="FunCoup" id="Q03403">
    <property type="interactions" value="98"/>
</dbReference>
<dbReference type="IntAct" id="Q03403">
    <property type="interactions" value="14"/>
</dbReference>
<dbReference type="MINT" id="Q03403"/>
<dbReference type="STRING" id="9606.ENSP00000291526"/>
<dbReference type="DrugBank" id="DB03088">
    <property type="generic name" value="Pidolic acid"/>
</dbReference>
<dbReference type="GlyGen" id="Q03403">
    <property type="glycosylation" value="1 site, 1 N-linked glycan (1 site)"/>
</dbReference>
<dbReference type="iPTMnet" id="Q03403"/>
<dbReference type="PhosphoSitePlus" id="Q03403"/>
<dbReference type="BioMuta" id="TFF2"/>
<dbReference type="DMDM" id="2833194"/>
<dbReference type="MassIVE" id="Q03403"/>
<dbReference type="PaxDb" id="9606-ENSP00000291526"/>
<dbReference type="PeptideAtlas" id="Q03403"/>
<dbReference type="ProteomicsDB" id="58207"/>
<dbReference type="Antibodypedia" id="23779">
    <property type="antibodies" value="361 antibodies from 35 providers"/>
</dbReference>
<dbReference type="DNASU" id="7032"/>
<dbReference type="Ensembl" id="ENST00000291526.5">
    <property type="protein sequence ID" value="ENSP00000291526.4"/>
    <property type="gene ID" value="ENSG00000160181.9"/>
</dbReference>
<dbReference type="GeneID" id="7032"/>
<dbReference type="KEGG" id="hsa:7032"/>
<dbReference type="MANE-Select" id="ENST00000291526.5">
    <property type="protein sequence ID" value="ENSP00000291526.4"/>
    <property type="RefSeq nucleotide sequence ID" value="NM_005423.5"/>
    <property type="RefSeq protein sequence ID" value="NP_005414.1"/>
</dbReference>
<dbReference type="UCSC" id="uc002zaw.4">
    <property type="organism name" value="human"/>
</dbReference>
<dbReference type="AGR" id="HGNC:11756"/>
<dbReference type="CTD" id="7032"/>
<dbReference type="DisGeNET" id="7032"/>
<dbReference type="GeneCards" id="TFF2"/>
<dbReference type="HGNC" id="HGNC:11756">
    <property type="gene designation" value="TFF2"/>
</dbReference>
<dbReference type="HPA" id="ENSG00000160181">
    <property type="expression patterns" value="Tissue enriched (stomach)"/>
</dbReference>
<dbReference type="MIM" id="182590">
    <property type="type" value="gene"/>
</dbReference>
<dbReference type="neXtProt" id="NX_Q03403"/>
<dbReference type="OpenTargets" id="ENSG00000160181"/>
<dbReference type="PharmGKB" id="PA36471"/>
<dbReference type="VEuPathDB" id="HostDB:ENSG00000160181"/>
<dbReference type="eggNOG" id="ENOG502S5ZY">
    <property type="taxonomic scope" value="Eukaryota"/>
</dbReference>
<dbReference type="GeneTree" id="ENSGT00940000161334"/>
<dbReference type="HOGENOM" id="CLU_161058_0_0_1"/>
<dbReference type="InParanoid" id="Q03403"/>
<dbReference type="OMA" id="ITSEQCF"/>
<dbReference type="OrthoDB" id="10051464at2759"/>
<dbReference type="PAN-GO" id="Q03403">
    <property type="GO annotations" value="5 GO annotations based on evolutionary models"/>
</dbReference>
<dbReference type="PhylomeDB" id="Q03403"/>
<dbReference type="TreeFam" id="TF336092"/>
<dbReference type="PathwayCommons" id="Q03403"/>
<dbReference type="SignaLink" id="Q03403"/>
<dbReference type="BioGRID-ORCS" id="7032">
    <property type="hits" value="12 hits in 1148 CRISPR screens"/>
</dbReference>
<dbReference type="ChiTaRS" id="TFF2">
    <property type="organism name" value="human"/>
</dbReference>
<dbReference type="GeneWiki" id="Trefoil_factor_2"/>
<dbReference type="GenomeRNAi" id="7032"/>
<dbReference type="Pharos" id="Q03403">
    <property type="development level" value="Tbio"/>
</dbReference>
<dbReference type="PRO" id="PR:Q03403"/>
<dbReference type="Proteomes" id="UP000005640">
    <property type="component" value="Chromosome 21"/>
</dbReference>
<dbReference type="RNAct" id="Q03403">
    <property type="molecule type" value="protein"/>
</dbReference>
<dbReference type="Bgee" id="ENSG00000160181">
    <property type="expression patterns" value="Expressed in pancreatic ductal cell and 107 other cell types or tissues"/>
</dbReference>
<dbReference type="GO" id="GO:0005615">
    <property type="term" value="C:extracellular space"/>
    <property type="evidence" value="ECO:0000318"/>
    <property type="project" value="GO_Central"/>
</dbReference>
<dbReference type="GO" id="GO:0031723">
    <property type="term" value="F:CXCR4 chemokine receptor binding"/>
    <property type="evidence" value="ECO:0000318"/>
    <property type="project" value="GO_Central"/>
</dbReference>
<dbReference type="GO" id="GO:0070098">
    <property type="term" value="P:chemokine-mediated signaling pathway"/>
    <property type="evidence" value="ECO:0000318"/>
    <property type="project" value="GO_Central"/>
</dbReference>
<dbReference type="GO" id="GO:0030277">
    <property type="term" value="P:maintenance of gastrointestinal epithelium"/>
    <property type="evidence" value="ECO:0000318"/>
    <property type="project" value="GO_Central"/>
</dbReference>
<dbReference type="GO" id="GO:0060455">
    <property type="term" value="P:negative regulation of gastric acid secretion"/>
    <property type="evidence" value="ECO:0000318"/>
    <property type="project" value="GO_Central"/>
</dbReference>
<dbReference type="CDD" id="cd00111">
    <property type="entry name" value="Trefoil"/>
    <property type="match status" value="2"/>
</dbReference>
<dbReference type="FunFam" id="4.10.110.10:FF:000005">
    <property type="entry name" value="Trefoil factor 2"/>
    <property type="match status" value="1"/>
</dbReference>
<dbReference type="FunFam" id="4.10.110.10:FF:000001">
    <property type="entry name" value="Trefoil factor 3"/>
    <property type="match status" value="1"/>
</dbReference>
<dbReference type="Gene3D" id="4.10.110.10">
    <property type="entry name" value="Spasmolytic Protein, domain 1"/>
    <property type="match status" value="2"/>
</dbReference>
<dbReference type="InterPro" id="IPR017994">
    <property type="entry name" value="P_trefoil_chordata"/>
</dbReference>
<dbReference type="InterPro" id="IPR017957">
    <property type="entry name" value="P_trefoil_CS"/>
</dbReference>
<dbReference type="InterPro" id="IPR000519">
    <property type="entry name" value="P_trefoil_dom"/>
</dbReference>
<dbReference type="InterPro" id="IPR044913">
    <property type="entry name" value="P_trefoil_dom_sf"/>
</dbReference>
<dbReference type="PANTHER" id="PTHR13826">
    <property type="entry name" value="INTESTINAL TREFOIL FACTOR-RELATED"/>
    <property type="match status" value="1"/>
</dbReference>
<dbReference type="PANTHER" id="PTHR13826:SF17">
    <property type="entry name" value="TREFOIL FACTOR 2"/>
    <property type="match status" value="1"/>
</dbReference>
<dbReference type="Pfam" id="PF00088">
    <property type="entry name" value="Trefoil"/>
    <property type="match status" value="2"/>
</dbReference>
<dbReference type="PRINTS" id="PR00680">
    <property type="entry name" value="PTREFOIL"/>
</dbReference>
<dbReference type="SMART" id="SM00018">
    <property type="entry name" value="PD"/>
    <property type="match status" value="2"/>
</dbReference>
<dbReference type="SUPFAM" id="SSF57492">
    <property type="entry name" value="Trefoil"/>
    <property type="match status" value="2"/>
</dbReference>
<dbReference type="PROSITE" id="PS00025">
    <property type="entry name" value="P_TREFOIL_1"/>
    <property type="match status" value="2"/>
</dbReference>
<dbReference type="PROSITE" id="PS51448">
    <property type="entry name" value="P_TREFOIL_2"/>
    <property type="match status" value="2"/>
</dbReference>
<gene>
    <name type="primary">TFF2</name>
    <name type="synonym">SML1</name>
</gene>
<proteinExistence type="evidence at protein level"/>
<name>TFF2_HUMAN</name>
<accession>Q03403</accession>
<accession>Q15854</accession>
<sequence length="129" mass="14284">MGRRDAQLLAALLVLGLCALAGSEKPSPCQCSRLSPHNRTNCGFPGITSDQCFDNGCCFDSSVTGVPWCFHPLPKQESDQCVMEVSDRRNCGYPGISPEECASRKCCFSNFIFEVPWCFFPKSVEDCHY</sequence>
<comment type="function">
    <text evidence="1">Inhibits gastrointestinal motility and gastric acid secretion. Could function as a structural component of gastric mucus, possibly by stabilizing glycoproteins in the mucus gel through interactions with carbohydrate side chains (By similarity).</text>
</comment>
<comment type="interaction">
    <interactant intactId="EBI-4314702">
        <id>Q03403</id>
    </interactant>
    <interactant intactId="EBI-353779">
        <id>O00571</id>
        <label>DDX3X</label>
    </interactant>
    <organismsDiffer>false</organismsDiffer>
    <experiments>3</experiments>
</comment>
<comment type="interaction">
    <interactant intactId="EBI-4314702">
        <id>Q03403</id>
    </interactant>
    <interactant intactId="EBI-357034">
        <id>P25685</id>
        <label>DNAJB1</label>
    </interactant>
    <organismsDiffer>false</organismsDiffer>
    <experiments>3</experiments>
</comment>
<comment type="interaction">
    <interactant intactId="EBI-4314702">
        <id>Q03403</id>
    </interactant>
    <interactant intactId="EBI-10968534">
        <id>P50570-2</id>
        <label>DNM2</label>
    </interactant>
    <organismsDiffer>false</organismsDiffer>
    <experiments>3</experiments>
</comment>
<comment type="interaction">
    <interactant intactId="EBI-4314702">
        <id>Q03403</id>
    </interactant>
    <interactant intactId="EBI-11075944">
        <id>Q12926-2</id>
        <label>ELAVL2</label>
    </interactant>
    <organismsDiffer>false</organismsDiffer>
    <experiments>3</experiments>
</comment>
<comment type="interaction">
    <interactant intactId="EBI-4314702">
        <id>Q03403</id>
    </interactant>
    <interactant intactId="EBI-4314687">
        <id>Q96PJ5</id>
        <label>FCRL4</label>
    </interactant>
    <organismsDiffer>false</organismsDiffer>
    <experiments>3</experiments>
</comment>
<comment type="interaction">
    <interactant intactId="EBI-4314702">
        <id>Q03403</id>
    </interactant>
    <interactant intactId="EBI-466029">
        <id>P42858</id>
        <label>HTT</label>
    </interactant>
    <organismsDiffer>false</organismsDiffer>
    <experiments>18</experiments>
</comment>
<comment type="interaction">
    <interactant intactId="EBI-4314702">
        <id>Q03403</id>
    </interactant>
    <interactant intactId="EBI-25913059">
        <id>Q96HC4-3</id>
        <label>PDLIM5</label>
    </interactant>
    <organismsDiffer>false</organismsDiffer>
    <experiments>3</experiments>
</comment>
<comment type="interaction">
    <interactant intactId="EBI-4314702">
        <id>Q03403</id>
    </interactant>
    <interactant intactId="EBI-50433196">
        <id>A0A6Q8PF08</id>
        <label>PMP22</label>
    </interactant>
    <organismsDiffer>false</organismsDiffer>
    <experiments>3</experiments>
</comment>
<comment type="interaction">
    <interactant intactId="EBI-4314702">
        <id>Q03403</id>
    </interactant>
    <interactant intactId="EBI-624585">
        <id>P62308</id>
        <label>SNRPG</label>
    </interactant>
    <organismsDiffer>false</organismsDiffer>
    <experiments>3</experiments>
</comment>
<comment type="interaction">
    <interactant intactId="EBI-4314702">
        <id>Q03403</id>
    </interactant>
    <interactant intactId="EBI-1560194">
        <id>Q15545</id>
        <label>TAF7</label>
    </interactant>
    <organismsDiffer>false</organismsDiffer>
    <experiments>3</experiments>
</comment>
<comment type="interaction">
    <interactant intactId="EBI-4314702">
        <id>Q03403</id>
    </interactant>
    <interactant intactId="EBI-350864">
        <id>P07437</id>
        <label>TUBB</label>
    </interactant>
    <organismsDiffer>false</organismsDiffer>
    <experiments>3</experiments>
</comment>
<comment type="interaction">
    <interactant intactId="EBI-4314702">
        <id>Q03403</id>
    </interactant>
    <interactant intactId="EBI-948566">
        <id>Q9Y6X8</id>
        <label>ZHX2</label>
    </interactant>
    <organismsDiffer>false</organismsDiffer>
    <experiments>3</experiments>
</comment>
<comment type="subcellular location">
    <subcellularLocation>
        <location>Secreted</location>
    </subcellularLocation>
</comment>
<comment type="tissue specificity">
    <text>Stomach.</text>
</comment>
<comment type="online information" name="Atlas of Genetics and Cytogenetics in Oncology and Haematology">
    <link uri="https://atlasgeneticsoncology.org/gene/264/TFF2"/>
</comment>
<evidence type="ECO:0000250" key="1"/>
<evidence type="ECO:0000255" key="2"/>
<evidence type="ECO:0000255" key="3">
    <source>
        <dbReference type="PROSITE-ProRule" id="PRU00779"/>
    </source>
</evidence>
<evidence type="ECO:0000305" key="4"/>